<feature type="chain" id="PRO_1000095579" description="Histidine--tRNA ligase">
    <location>
        <begin position="1"/>
        <end position="423"/>
    </location>
</feature>
<accession>A9B9Z7</accession>
<proteinExistence type="inferred from homology"/>
<organism>
    <name type="scientific">Prochlorococcus marinus (strain MIT 9211)</name>
    <dbReference type="NCBI Taxonomy" id="93059"/>
    <lineage>
        <taxon>Bacteria</taxon>
        <taxon>Bacillati</taxon>
        <taxon>Cyanobacteriota</taxon>
        <taxon>Cyanophyceae</taxon>
        <taxon>Synechococcales</taxon>
        <taxon>Prochlorococcaceae</taxon>
        <taxon>Prochlorococcus</taxon>
    </lineage>
</organism>
<evidence type="ECO:0000255" key="1">
    <source>
        <dbReference type="HAMAP-Rule" id="MF_00127"/>
    </source>
</evidence>
<dbReference type="EC" id="6.1.1.21" evidence="1"/>
<dbReference type="EMBL" id="CP000878">
    <property type="protein sequence ID" value="ABX08659.1"/>
    <property type="molecule type" value="Genomic_DNA"/>
</dbReference>
<dbReference type="RefSeq" id="WP_012195281.1">
    <property type="nucleotide sequence ID" value="NC_009976.1"/>
</dbReference>
<dbReference type="SMR" id="A9B9Z7"/>
<dbReference type="STRING" id="93059.P9211_07281"/>
<dbReference type="KEGG" id="pmj:P9211_07281"/>
<dbReference type="eggNOG" id="COG0124">
    <property type="taxonomic scope" value="Bacteria"/>
</dbReference>
<dbReference type="HOGENOM" id="CLU_025113_1_1_3"/>
<dbReference type="OrthoDB" id="9800814at2"/>
<dbReference type="Proteomes" id="UP000000788">
    <property type="component" value="Chromosome"/>
</dbReference>
<dbReference type="GO" id="GO:0005737">
    <property type="term" value="C:cytoplasm"/>
    <property type="evidence" value="ECO:0007669"/>
    <property type="project" value="UniProtKB-SubCell"/>
</dbReference>
<dbReference type="GO" id="GO:0005524">
    <property type="term" value="F:ATP binding"/>
    <property type="evidence" value="ECO:0007669"/>
    <property type="project" value="UniProtKB-UniRule"/>
</dbReference>
<dbReference type="GO" id="GO:0004821">
    <property type="term" value="F:histidine-tRNA ligase activity"/>
    <property type="evidence" value="ECO:0007669"/>
    <property type="project" value="UniProtKB-UniRule"/>
</dbReference>
<dbReference type="GO" id="GO:0006427">
    <property type="term" value="P:histidyl-tRNA aminoacylation"/>
    <property type="evidence" value="ECO:0007669"/>
    <property type="project" value="UniProtKB-UniRule"/>
</dbReference>
<dbReference type="CDD" id="cd00773">
    <property type="entry name" value="HisRS-like_core"/>
    <property type="match status" value="1"/>
</dbReference>
<dbReference type="CDD" id="cd00859">
    <property type="entry name" value="HisRS_anticodon"/>
    <property type="match status" value="1"/>
</dbReference>
<dbReference type="Gene3D" id="3.40.50.800">
    <property type="entry name" value="Anticodon-binding domain"/>
    <property type="match status" value="1"/>
</dbReference>
<dbReference type="Gene3D" id="3.30.930.10">
    <property type="entry name" value="Bira Bifunctional Protein, Domain 2"/>
    <property type="match status" value="1"/>
</dbReference>
<dbReference type="HAMAP" id="MF_00127">
    <property type="entry name" value="His_tRNA_synth"/>
    <property type="match status" value="1"/>
</dbReference>
<dbReference type="InterPro" id="IPR006195">
    <property type="entry name" value="aa-tRNA-synth_II"/>
</dbReference>
<dbReference type="InterPro" id="IPR045864">
    <property type="entry name" value="aa-tRNA-synth_II/BPL/LPL"/>
</dbReference>
<dbReference type="InterPro" id="IPR004154">
    <property type="entry name" value="Anticodon-bd"/>
</dbReference>
<dbReference type="InterPro" id="IPR036621">
    <property type="entry name" value="Anticodon-bd_dom_sf"/>
</dbReference>
<dbReference type="InterPro" id="IPR015807">
    <property type="entry name" value="His-tRNA-ligase"/>
</dbReference>
<dbReference type="InterPro" id="IPR041715">
    <property type="entry name" value="HisRS-like_core"/>
</dbReference>
<dbReference type="InterPro" id="IPR004516">
    <property type="entry name" value="HisRS/HisZ"/>
</dbReference>
<dbReference type="InterPro" id="IPR033656">
    <property type="entry name" value="HisRS_anticodon"/>
</dbReference>
<dbReference type="NCBIfam" id="TIGR00442">
    <property type="entry name" value="hisS"/>
    <property type="match status" value="1"/>
</dbReference>
<dbReference type="PANTHER" id="PTHR43707:SF1">
    <property type="entry name" value="HISTIDINE--TRNA LIGASE, MITOCHONDRIAL-RELATED"/>
    <property type="match status" value="1"/>
</dbReference>
<dbReference type="PANTHER" id="PTHR43707">
    <property type="entry name" value="HISTIDYL-TRNA SYNTHETASE"/>
    <property type="match status" value="1"/>
</dbReference>
<dbReference type="Pfam" id="PF03129">
    <property type="entry name" value="HGTP_anticodon"/>
    <property type="match status" value="1"/>
</dbReference>
<dbReference type="Pfam" id="PF13393">
    <property type="entry name" value="tRNA-synt_His"/>
    <property type="match status" value="1"/>
</dbReference>
<dbReference type="PIRSF" id="PIRSF001549">
    <property type="entry name" value="His-tRNA_synth"/>
    <property type="match status" value="1"/>
</dbReference>
<dbReference type="SUPFAM" id="SSF52954">
    <property type="entry name" value="Class II aaRS ABD-related"/>
    <property type="match status" value="1"/>
</dbReference>
<dbReference type="SUPFAM" id="SSF55681">
    <property type="entry name" value="Class II aaRS and biotin synthetases"/>
    <property type="match status" value="1"/>
</dbReference>
<dbReference type="PROSITE" id="PS50862">
    <property type="entry name" value="AA_TRNA_LIGASE_II"/>
    <property type="match status" value="1"/>
</dbReference>
<gene>
    <name evidence="1" type="primary">hisS</name>
    <name type="ordered locus">P9211_07281</name>
</gene>
<name>SYH_PROM4</name>
<reference key="1">
    <citation type="journal article" date="2007" name="PLoS Genet.">
        <title>Patterns and implications of gene gain and loss in the evolution of Prochlorococcus.</title>
        <authorList>
            <person name="Kettler G.C."/>
            <person name="Martiny A.C."/>
            <person name="Huang K."/>
            <person name="Zucker J."/>
            <person name="Coleman M.L."/>
            <person name="Rodrigue S."/>
            <person name="Chen F."/>
            <person name="Lapidus A."/>
            <person name="Ferriera S."/>
            <person name="Johnson J."/>
            <person name="Steglich C."/>
            <person name="Church G.M."/>
            <person name="Richardson P."/>
            <person name="Chisholm S.W."/>
        </authorList>
    </citation>
    <scope>NUCLEOTIDE SEQUENCE [LARGE SCALE GENOMIC DNA]</scope>
    <source>
        <strain>MIT 9211</strain>
    </source>
</reference>
<sequence>MTEFQTLRGMVDLLPMQTQRWQIVENLARHHFHRAGLKEIRTPLLEITELFARGIGEATDVVGKEMYTFLDRGDRSCTLRPEGTASVVRSVVQHGLLNQGPQRLWYGGPMFRYERPQAGRQRQFHQMGVEFFGLPSIHADAELISIAWDLLQDLGLKDLKLELNSLGTFEDRQNYHARLNEWLECNFKLLDKDSQDRIHKNPLRILDTKNQSTQELLKDAPLLTDYLSDLSKERFLCLQEALHKLKIPFDLNHNLVRGLDYYCHTAFEITSSQLGAQATVCGGGRYDRLVKQLGGPDTPSIGWAIGMERLIILLEDSIHKEQFVDVYFINRGELPAIEALSLTRKLRAFNIIVELDHSQANFSKQFKRANRSNAKWAIIMGEDEIAKGEIRLKRLTSSINGDGFDEICFRNSEFNELVHTLKN</sequence>
<protein>
    <recommendedName>
        <fullName evidence="1">Histidine--tRNA ligase</fullName>
        <ecNumber evidence="1">6.1.1.21</ecNumber>
    </recommendedName>
    <alternativeName>
        <fullName evidence="1">Histidyl-tRNA synthetase</fullName>
        <shortName evidence="1">HisRS</shortName>
    </alternativeName>
</protein>
<comment type="catalytic activity">
    <reaction evidence="1">
        <text>tRNA(His) + L-histidine + ATP = L-histidyl-tRNA(His) + AMP + diphosphate + H(+)</text>
        <dbReference type="Rhea" id="RHEA:17313"/>
        <dbReference type="Rhea" id="RHEA-COMP:9665"/>
        <dbReference type="Rhea" id="RHEA-COMP:9689"/>
        <dbReference type="ChEBI" id="CHEBI:15378"/>
        <dbReference type="ChEBI" id="CHEBI:30616"/>
        <dbReference type="ChEBI" id="CHEBI:33019"/>
        <dbReference type="ChEBI" id="CHEBI:57595"/>
        <dbReference type="ChEBI" id="CHEBI:78442"/>
        <dbReference type="ChEBI" id="CHEBI:78527"/>
        <dbReference type="ChEBI" id="CHEBI:456215"/>
        <dbReference type="EC" id="6.1.1.21"/>
    </reaction>
</comment>
<comment type="subunit">
    <text evidence="1">Homodimer.</text>
</comment>
<comment type="subcellular location">
    <subcellularLocation>
        <location evidence="1">Cytoplasm</location>
    </subcellularLocation>
</comment>
<comment type="similarity">
    <text evidence="1">Belongs to the class-II aminoacyl-tRNA synthetase family.</text>
</comment>
<keyword id="KW-0030">Aminoacyl-tRNA synthetase</keyword>
<keyword id="KW-0067">ATP-binding</keyword>
<keyword id="KW-0963">Cytoplasm</keyword>
<keyword id="KW-0436">Ligase</keyword>
<keyword id="KW-0547">Nucleotide-binding</keyword>
<keyword id="KW-0648">Protein biosynthesis</keyword>
<keyword id="KW-1185">Reference proteome</keyword>